<reference key="1">
    <citation type="journal article" date="2003" name="Proc. Natl. Acad. Sci. U.S.A.">
        <title>The complete genome sequence of Mycobacterium bovis.</title>
        <authorList>
            <person name="Garnier T."/>
            <person name="Eiglmeier K."/>
            <person name="Camus J.-C."/>
            <person name="Medina N."/>
            <person name="Mansoor H."/>
            <person name="Pryor M."/>
            <person name="Duthoy S."/>
            <person name="Grondin S."/>
            <person name="Lacroix C."/>
            <person name="Monsempe C."/>
            <person name="Simon S."/>
            <person name="Harris B."/>
            <person name="Atkin R."/>
            <person name="Doggett J."/>
            <person name="Mayes R."/>
            <person name="Keating L."/>
            <person name="Wheeler P.R."/>
            <person name="Parkhill J."/>
            <person name="Barrell B.G."/>
            <person name="Cole S.T."/>
            <person name="Gordon S.V."/>
            <person name="Hewinson R.G."/>
        </authorList>
    </citation>
    <scope>NUCLEOTIDE SEQUENCE [LARGE SCALE GENOMIC DNA]</scope>
    <source>
        <strain>ATCC BAA-935 / AF2122/97</strain>
    </source>
</reference>
<reference key="2">
    <citation type="journal article" date="2017" name="Genome Announc.">
        <title>Updated reference genome sequence and annotation of Mycobacterium bovis AF2122/97.</title>
        <authorList>
            <person name="Malone K.M."/>
            <person name="Farrell D."/>
            <person name="Stuber T.P."/>
            <person name="Schubert O.T."/>
            <person name="Aebersold R."/>
            <person name="Robbe-Austerman S."/>
            <person name="Gordon S.V."/>
        </authorList>
    </citation>
    <scope>NUCLEOTIDE SEQUENCE [LARGE SCALE GENOMIC DNA]</scope>
    <scope>GENOME REANNOTATION</scope>
    <source>
        <strain>ATCC BAA-935 / AF2122/97</strain>
    </source>
</reference>
<accession>Q7U054</accession>
<accession>A0A1R3XY71</accession>
<accession>X2BHH6</accession>
<organism>
    <name type="scientific">Mycobacterium bovis (strain ATCC BAA-935 / AF2122/97)</name>
    <dbReference type="NCBI Taxonomy" id="233413"/>
    <lineage>
        <taxon>Bacteria</taxon>
        <taxon>Bacillati</taxon>
        <taxon>Actinomycetota</taxon>
        <taxon>Actinomycetes</taxon>
        <taxon>Mycobacteriales</taxon>
        <taxon>Mycobacteriaceae</taxon>
        <taxon>Mycobacterium</taxon>
        <taxon>Mycobacterium tuberculosis complex</taxon>
    </lineage>
</organism>
<keyword id="KW-0028">Amino-acid biosynthesis</keyword>
<keyword id="KW-0055">Arginine biosynthesis</keyword>
<keyword id="KW-0067">ATP-binding</keyword>
<keyword id="KW-0436">Ligase</keyword>
<keyword id="KW-0460">Magnesium</keyword>
<keyword id="KW-0464">Manganese</keyword>
<keyword id="KW-0479">Metal-binding</keyword>
<keyword id="KW-0547">Nucleotide-binding</keyword>
<keyword id="KW-0665">Pyrimidine biosynthesis</keyword>
<keyword id="KW-1185">Reference proteome</keyword>
<keyword id="KW-0677">Repeat</keyword>
<name>CARB_MYCBO</name>
<sequence length="1115" mass="119019">MPRRTDLHHVLVIGSGPIVIGQACEFDYSGTQACRVLRAEGLQVSLVNSNPATIMTDPEFADHTYVEPITPAFVERVIAQQAERGNKIDALLATLGGQTALNTAVALYESGVLEKYGVELIGADFDAIQRGEDRQRFKDIVAKAGGESARSRVCFTMAEVRETVAELGLPVVVRPSFTMGGLGSGIAYSTDEVDRMAGAGLAASPSANVLIEESIYGWKEFELELMRDGHDNVVVVCSIENVDPMGVHTGDSVTVAPAMTLTDREYQRMRDLGIAILREVGVDTGGCNIQFAVNPRDGRLIVIEMNPRVSRSSALASKATGFPIAKIAAKLAIGYTLDEIVNDITGETPACFEPTLDYVVVKAPRFAFEKFPGADPTLTTTMKSVGEAMSLGRNFVEALGKVMRSLETTRAGFWTAPDPDGGIEEALTRLRTPAEGRLYDIELALRLGATVERVAEASGVDPWFIAQINELVNLRNELVAAPVLNAELLRRAKHSGLSDHQIASLRPELAGEAGVRSLRVRLGIHPVYKTVDTCAAEFEAQTPYHYSSYELDPAAETEVAPQTERPKVLILGSGPNRIGQGIEFDYSCVHAATTLSQAGFETVMVNCNPETVSTDYDTADRLYFEPLTFEDVLEVYHAEMESGSGGPGVAGVIVQLGGQTPLGLAHRLADAGVPIVGTPPEAIDLAEDRGAFGDLLSAAGLPAPKYGTATTFAQARRIAEEIGYPVLVRPSYVLGGRGMEIVYDEETLQGYITRATQLSPEHPVLVDRFLEDAVEIDVDALCDGAEVYIGGIMEHIEEAGIHSGDSACALPPVTLGRSDIEKVRKATEAIAHGIGVVGLLNVQYALKDDVLYVLEANPRASRTVPFVSKATAVPLAKACARIMLGATIAQLRAEGLLAVTGDGAHAARNAPIAVKEAVLPFHRFRRADGAAIDSLLGPEMKSTGEVMGIDRDFGSAFAKSQTAAYGSLPAQGTVFVSVANRDKRSLVFPVKRLADLGFRVLATEGTAEMLRRNGIPCDDVRKHFEPAQPGRPTMSAVDAIRAGEVNMVINTPYGNSGPRIDGYEIRSAAVAGNIPCITTVQGASAAVQGIEAGIRGDIGVRSLQELHRVIGGVER</sequence>
<dbReference type="EC" id="6.3.4.16" evidence="1"/>
<dbReference type="EC" id="6.3.5.5" evidence="1"/>
<dbReference type="EMBL" id="LT708304">
    <property type="protein sequence ID" value="SIU00022.1"/>
    <property type="molecule type" value="Genomic_DNA"/>
</dbReference>
<dbReference type="RefSeq" id="NP_855071.1">
    <property type="nucleotide sequence ID" value="NC_002945.3"/>
</dbReference>
<dbReference type="RefSeq" id="WP_003407211.1">
    <property type="nucleotide sequence ID" value="NC_002945.4"/>
</dbReference>
<dbReference type="SMR" id="Q7U054"/>
<dbReference type="KEGG" id="mbo:BQ2027_MB1419"/>
<dbReference type="PATRIC" id="fig|233413.5.peg.1554"/>
<dbReference type="UniPathway" id="UPA00068">
    <property type="reaction ID" value="UER00171"/>
</dbReference>
<dbReference type="UniPathway" id="UPA00070">
    <property type="reaction ID" value="UER00115"/>
</dbReference>
<dbReference type="Proteomes" id="UP000001419">
    <property type="component" value="Chromosome"/>
</dbReference>
<dbReference type="GO" id="GO:0005737">
    <property type="term" value="C:cytoplasm"/>
    <property type="evidence" value="ECO:0007669"/>
    <property type="project" value="TreeGrafter"/>
</dbReference>
<dbReference type="GO" id="GO:0005524">
    <property type="term" value="F:ATP binding"/>
    <property type="evidence" value="ECO:0007669"/>
    <property type="project" value="UniProtKB-UniRule"/>
</dbReference>
<dbReference type="GO" id="GO:0004087">
    <property type="term" value="F:carbamoyl-phosphate synthase (ammonia) activity"/>
    <property type="evidence" value="ECO:0007669"/>
    <property type="project" value="RHEA"/>
</dbReference>
<dbReference type="GO" id="GO:0004088">
    <property type="term" value="F:carbamoyl-phosphate synthase (glutamine-hydrolyzing) activity"/>
    <property type="evidence" value="ECO:0007669"/>
    <property type="project" value="UniProtKB-UniRule"/>
</dbReference>
<dbReference type="GO" id="GO:0046872">
    <property type="term" value="F:metal ion binding"/>
    <property type="evidence" value="ECO:0007669"/>
    <property type="project" value="UniProtKB-KW"/>
</dbReference>
<dbReference type="GO" id="GO:0044205">
    <property type="term" value="P:'de novo' UMP biosynthetic process"/>
    <property type="evidence" value="ECO:0007669"/>
    <property type="project" value="UniProtKB-UniRule"/>
</dbReference>
<dbReference type="GO" id="GO:0006541">
    <property type="term" value="P:glutamine metabolic process"/>
    <property type="evidence" value="ECO:0007669"/>
    <property type="project" value="TreeGrafter"/>
</dbReference>
<dbReference type="GO" id="GO:0006526">
    <property type="term" value="P:L-arginine biosynthetic process"/>
    <property type="evidence" value="ECO:0007669"/>
    <property type="project" value="UniProtKB-UniRule"/>
</dbReference>
<dbReference type="CDD" id="cd01424">
    <property type="entry name" value="MGS_CPS_II"/>
    <property type="match status" value="1"/>
</dbReference>
<dbReference type="FunFam" id="1.10.1030.10:FF:000002">
    <property type="entry name" value="Carbamoyl-phosphate synthase large chain"/>
    <property type="match status" value="1"/>
</dbReference>
<dbReference type="FunFam" id="3.30.1490.20:FF:000001">
    <property type="entry name" value="Carbamoyl-phosphate synthase large chain"/>
    <property type="match status" value="1"/>
</dbReference>
<dbReference type="FunFam" id="3.30.470.20:FF:000007">
    <property type="entry name" value="Carbamoyl-phosphate synthase large chain"/>
    <property type="match status" value="1"/>
</dbReference>
<dbReference type="FunFam" id="3.30.470.20:FF:000014">
    <property type="entry name" value="Carbamoyl-phosphate synthase large chain"/>
    <property type="match status" value="1"/>
</dbReference>
<dbReference type="FunFam" id="3.40.50.1380:FF:000007">
    <property type="entry name" value="Carbamoyl-phosphate synthase large chain"/>
    <property type="match status" value="1"/>
</dbReference>
<dbReference type="FunFam" id="3.40.50.20:FF:000001">
    <property type="entry name" value="Carbamoyl-phosphate synthase large chain"/>
    <property type="match status" value="2"/>
</dbReference>
<dbReference type="Gene3D" id="3.40.50.20">
    <property type="match status" value="2"/>
</dbReference>
<dbReference type="Gene3D" id="3.30.1490.20">
    <property type="entry name" value="ATP-grasp fold, A domain"/>
    <property type="match status" value="1"/>
</dbReference>
<dbReference type="Gene3D" id="3.30.470.20">
    <property type="entry name" value="ATP-grasp fold, B domain"/>
    <property type="match status" value="2"/>
</dbReference>
<dbReference type="Gene3D" id="1.10.1030.10">
    <property type="entry name" value="Carbamoyl-phosphate synthetase, large subunit oligomerisation domain"/>
    <property type="match status" value="1"/>
</dbReference>
<dbReference type="Gene3D" id="3.40.50.1380">
    <property type="entry name" value="Methylglyoxal synthase-like domain"/>
    <property type="match status" value="1"/>
</dbReference>
<dbReference type="HAMAP" id="MF_01210_B">
    <property type="entry name" value="CPSase_L_chain_B"/>
    <property type="match status" value="1"/>
</dbReference>
<dbReference type="InterPro" id="IPR011761">
    <property type="entry name" value="ATP-grasp"/>
</dbReference>
<dbReference type="InterPro" id="IPR013815">
    <property type="entry name" value="ATP_grasp_subdomain_1"/>
</dbReference>
<dbReference type="InterPro" id="IPR006275">
    <property type="entry name" value="CarbamoylP_synth_lsu"/>
</dbReference>
<dbReference type="InterPro" id="IPR005480">
    <property type="entry name" value="CarbamoylP_synth_lsu_oligo"/>
</dbReference>
<dbReference type="InterPro" id="IPR036897">
    <property type="entry name" value="CarbamoylP_synth_lsu_oligo_sf"/>
</dbReference>
<dbReference type="InterPro" id="IPR005479">
    <property type="entry name" value="CbamoylP_synth_lsu-like_ATP-bd"/>
</dbReference>
<dbReference type="InterPro" id="IPR005483">
    <property type="entry name" value="CbamoylP_synth_lsu_CPSase_dom"/>
</dbReference>
<dbReference type="InterPro" id="IPR011607">
    <property type="entry name" value="MGS-like_dom"/>
</dbReference>
<dbReference type="InterPro" id="IPR036914">
    <property type="entry name" value="MGS-like_dom_sf"/>
</dbReference>
<dbReference type="InterPro" id="IPR033937">
    <property type="entry name" value="MGS_CPS_CarB"/>
</dbReference>
<dbReference type="InterPro" id="IPR016185">
    <property type="entry name" value="PreATP-grasp_dom_sf"/>
</dbReference>
<dbReference type="NCBIfam" id="TIGR01369">
    <property type="entry name" value="CPSaseII_lrg"/>
    <property type="match status" value="1"/>
</dbReference>
<dbReference type="NCBIfam" id="NF003671">
    <property type="entry name" value="PRK05294.1"/>
    <property type="match status" value="1"/>
</dbReference>
<dbReference type="NCBIfam" id="NF009455">
    <property type="entry name" value="PRK12815.1"/>
    <property type="match status" value="1"/>
</dbReference>
<dbReference type="PANTHER" id="PTHR11405:SF53">
    <property type="entry name" value="CARBAMOYL-PHOSPHATE SYNTHASE [AMMONIA], MITOCHONDRIAL"/>
    <property type="match status" value="1"/>
</dbReference>
<dbReference type="PANTHER" id="PTHR11405">
    <property type="entry name" value="CARBAMOYLTRANSFERASE FAMILY MEMBER"/>
    <property type="match status" value="1"/>
</dbReference>
<dbReference type="Pfam" id="PF02786">
    <property type="entry name" value="CPSase_L_D2"/>
    <property type="match status" value="2"/>
</dbReference>
<dbReference type="Pfam" id="PF02787">
    <property type="entry name" value="CPSase_L_D3"/>
    <property type="match status" value="1"/>
</dbReference>
<dbReference type="Pfam" id="PF02142">
    <property type="entry name" value="MGS"/>
    <property type="match status" value="1"/>
</dbReference>
<dbReference type="PRINTS" id="PR00098">
    <property type="entry name" value="CPSASE"/>
</dbReference>
<dbReference type="SMART" id="SM01096">
    <property type="entry name" value="CPSase_L_D3"/>
    <property type="match status" value="1"/>
</dbReference>
<dbReference type="SMART" id="SM00851">
    <property type="entry name" value="MGS"/>
    <property type="match status" value="1"/>
</dbReference>
<dbReference type="SUPFAM" id="SSF48108">
    <property type="entry name" value="Carbamoyl phosphate synthetase, large subunit connection domain"/>
    <property type="match status" value="1"/>
</dbReference>
<dbReference type="SUPFAM" id="SSF56059">
    <property type="entry name" value="Glutathione synthetase ATP-binding domain-like"/>
    <property type="match status" value="2"/>
</dbReference>
<dbReference type="SUPFAM" id="SSF52335">
    <property type="entry name" value="Methylglyoxal synthase-like"/>
    <property type="match status" value="1"/>
</dbReference>
<dbReference type="SUPFAM" id="SSF52440">
    <property type="entry name" value="PreATP-grasp domain"/>
    <property type="match status" value="2"/>
</dbReference>
<dbReference type="PROSITE" id="PS50975">
    <property type="entry name" value="ATP_GRASP"/>
    <property type="match status" value="2"/>
</dbReference>
<dbReference type="PROSITE" id="PS00866">
    <property type="entry name" value="CPSASE_1"/>
    <property type="match status" value="1"/>
</dbReference>
<dbReference type="PROSITE" id="PS00867">
    <property type="entry name" value="CPSASE_2"/>
    <property type="match status" value="2"/>
</dbReference>
<dbReference type="PROSITE" id="PS51855">
    <property type="entry name" value="MGS"/>
    <property type="match status" value="1"/>
</dbReference>
<proteinExistence type="inferred from homology"/>
<evidence type="ECO:0000255" key="1">
    <source>
        <dbReference type="HAMAP-Rule" id="MF_01210"/>
    </source>
</evidence>
<feature type="chain" id="PRO_0000145021" description="Carbamoyl phosphate synthase large chain">
    <location>
        <begin position="1"/>
        <end position="1115"/>
    </location>
</feature>
<feature type="domain" description="ATP-grasp 1" evidence="1">
    <location>
        <begin position="138"/>
        <end position="333"/>
    </location>
</feature>
<feature type="domain" description="ATP-grasp 2" evidence="1">
    <location>
        <begin position="693"/>
        <end position="884"/>
    </location>
</feature>
<feature type="domain" description="MGS-like" evidence="1">
    <location>
        <begin position="966"/>
        <end position="1113"/>
    </location>
</feature>
<feature type="region of interest" description="Carboxyphosphate synthetic domain" evidence="1">
    <location>
        <begin position="1"/>
        <end position="407"/>
    </location>
</feature>
<feature type="region of interest" description="Oligomerization domain" evidence="1">
    <location>
        <begin position="408"/>
        <end position="559"/>
    </location>
</feature>
<feature type="region of interest" description="Carbamoyl phosphate synthetic domain" evidence="1">
    <location>
        <begin position="560"/>
        <end position="965"/>
    </location>
</feature>
<feature type="region of interest" description="Allosteric domain" evidence="1">
    <location>
        <begin position="966"/>
        <end position="1115"/>
    </location>
</feature>
<feature type="binding site" evidence="1">
    <location>
        <position position="134"/>
    </location>
    <ligand>
        <name>ATP</name>
        <dbReference type="ChEBI" id="CHEBI:30616"/>
        <label>1</label>
    </ligand>
</feature>
<feature type="binding site" evidence="1">
    <location>
        <position position="174"/>
    </location>
    <ligand>
        <name>ATP</name>
        <dbReference type="ChEBI" id="CHEBI:30616"/>
        <label>1</label>
    </ligand>
</feature>
<feature type="binding site" evidence="1">
    <location>
        <position position="180"/>
    </location>
    <ligand>
        <name>ATP</name>
        <dbReference type="ChEBI" id="CHEBI:30616"/>
        <label>1</label>
    </ligand>
</feature>
<feature type="binding site" evidence="1">
    <location>
        <position position="181"/>
    </location>
    <ligand>
        <name>ATP</name>
        <dbReference type="ChEBI" id="CHEBI:30616"/>
        <label>1</label>
    </ligand>
</feature>
<feature type="binding site" evidence="1">
    <location>
        <position position="213"/>
    </location>
    <ligand>
        <name>ATP</name>
        <dbReference type="ChEBI" id="CHEBI:30616"/>
        <label>1</label>
    </ligand>
</feature>
<feature type="binding site" evidence="1">
    <location>
        <position position="215"/>
    </location>
    <ligand>
        <name>ATP</name>
        <dbReference type="ChEBI" id="CHEBI:30616"/>
        <label>1</label>
    </ligand>
</feature>
<feature type="binding site" evidence="1">
    <location>
        <position position="220"/>
    </location>
    <ligand>
        <name>ATP</name>
        <dbReference type="ChEBI" id="CHEBI:30616"/>
        <label>1</label>
    </ligand>
</feature>
<feature type="binding site" evidence="1">
    <location>
        <position position="246"/>
    </location>
    <ligand>
        <name>ATP</name>
        <dbReference type="ChEBI" id="CHEBI:30616"/>
        <label>1</label>
    </ligand>
</feature>
<feature type="binding site" evidence="1">
    <location>
        <position position="247"/>
    </location>
    <ligand>
        <name>ATP</name>
        <dbReference type="ChEBI" id="CHEBI:30616"/>
        <label>1</label>
    </ligand>
</feature>
<feature type="binding site" evidence="1">
    <location>
        <position position="248"/>
    </location>
    <ligand>
        <name>ATP</name>
        <dbReference type="ChEBI" id="CHEBI:30616"/>
        <label>1</label>
    </ligand>
</feature>
<feature type="binding site" evidence="1">
    <location>
        <position position="290"/>
    </location>
    <ligand>
        <name>ATP</name>
        <dbReference type="ChEBI" id="CHEBI:30616"/>
        <label>1</label>
    </ligand>
</feature>
<feature type="binding site" evidence="1">
    <location>
        <position position="290"/>
    </location>
    <ligand>
        <name>Mg(2+)</name>
        <dbReference type="ChEBI" id="CHEBI:18420"/>
        <label>1</label>
    </ligand>
</feature>
<feature type="binding site" evidence="1">
    <location>
        <position position="290"/>
    </location>
    <ligand>
        <name>Mn(2+)</name>
        <dbReference type="ChEBI" id="CHEBI:29035"/>
        <label>1</label>
    </ligand>
</feature>
<feature type="binding site" evidence="1">
    <location>
        <position position="304"/>
    </location>
    <ligand>
        <name>ATP</name>
        <dbReference type="ChEBI" id="CHEBI:30616"/>
        <label>1</label>
    </ligand>
</feature>
<feature type="binding site" evidence="1">
    <location>
        <position position="304"/>
    </location>
    <ligand>
        <name>Mg(2+)</name>
        <dbReference type="ChEBI" id="CHEBI:18420"/>
        <label>1</label>
    </ligand>
</feature>
<feature type="binding site" evidence="1">
    <location>
        <position position="304"/>
    </location>
    <ligand>
        <name>Mg(2+)</name>
        <dbReference type="ChEBI" id="CHEBI:18420"/>
        <label>2</label>
    </ligand>
</feature>
<feature type="binding site" evidence="1">
    <location>
        <position position="304"/>
    </location>
    <ligand>
        <name>Mn(2+)</name>
        <dbReference type="ChEBI" id="CHEBI:29035"/>
        <label>1</label>
    </ligand>
</feature>
<feature type="binding site" evidence="1">
    <location>
        <position position="304"/>
    </location>
    <ligand>
        <name>Mn(2+)</name>
        <dbReference type="ChEBI" id="CHEBI:29035"/>
        <label>2</label>
    </ligand>
</feature>
<feature type="binding site" evidence="1">
    <location>
        <position position="306"/>
    </location>
    <ligand>
        <name>Mg(2+)</name>
        <dbReference type="ChEBI" id="CHEBI:18420"/>
        <label>2</label>
    </ligand>
</feature>
<feature type="binding site" evidence="1">
    <location>
        <position position="306"/>
    </location>
    <ligand>
        <name>Mn(2+)</name>
        <dbReference type="ChEBI" id="CHEBI:29035"/>
        <label>2</label>
    </ligand>
</feature>
<feature type="binding site" evidence="1">
    <location>
        <position position="729"/>
    </location>
    <ligand>
        <name>ATP</name>
        <dbReference type="ChEBI" id="CHEBI:30616"/>
        <label>2</label>
    </ligand>
</feature>
<feature type="binding site" evidence="1">
    <location>
        <position position="768"/>
    </location>
    <ligand>
        <name>ATP</name>
        <dbReference type="ChEBI" id="CHEBI:30616"/>
        <label>2</label>
    </ligand>
</feature>
<feature type="binding site" evidence="1">
    <location>
        <position position="770"/>
    </location>
    <ligand>
        <name>ATP</name>
        <dbReference type="ChEBI" id="CHEBI:30616"/>
        <label>2</label>
    </ligand>
</feature>
<feature type="binding site" evidence="1">
    <location>
        <position position="775"/>
    </location>
    <ligand>
        <name>ATP</name>
        <dbReference type="ChEBI" id="CHEBI:30616"/>
        <label>2</label>
    </ligand>
</feature>
<feature type="binding site" evidence="1">
    <location>
        <position position="800"/>
    </location>
    <ligand>
        <name>ATP</name>
        <dbReference type="ChEBI" id="CHEBI:30616"/>
        <label>2</label>
    </ligand>
</feature>
<feature type="binding site" evidence="1">
    <location>
        <position position="801"/>
    </location>
    <ligand>
        <name>ATP</name>
        <dbReference type="ChEBI" id="CHEBI:30616"/>
        <label>2</label>
    </ligand>
</feature>
<feature type="binding site" evidence="1">
    <location>
        <position position="802"/>
    </location>
    <ligand>
        <name>ATP</name>
        <dbReference type="ChEBI" id="CHEBI:30616"/>
        <label>2</label>
    </ligand>
</feature>
<feature type="binding site" evidence="1">
    <location>
        <position position="803"/>
    </location>
    <ligand>
        <name>ATP</name>
        <dbReference type="ChEBI" id="CHEBI:30616"/>
        <label>2</label>
    </ligand>
</feature>
<feature type="binding site" evidence="1">
    <location>
        <position position="843"/>
    </location>
    <ligand>
        <name>ATP</name>
        <dbReference type="ChEBI" id="CHEBI:30616"/>
        <label>2</label>
    </ligand>
</feature>
<feature type="binding site" evidence="1">
    <location>
        <position position="843"/>
    </location>
    <ligand>
        <name>Mg(2+)</name>
        <dbReference type="ChEBI" id="CHEBI:18420"/>
        <label>3</label>
    </ligand>
</feature>
<feature type="binding site" evidence="1">
    <location>
        <position position="843"/>
    </location>
    <ligand>
        <name>Mn(2+)</name>
        <dbReference type="ChEBI" id="CHEBI:29035"/>
        <label>3</label>
    </ligand>
</feature>
<feature type="binding site" evidence="1">
    <location>
        <position position="855"/>
    </location>
    <ligand>
        <name>ATP</name>
        <dbReference type="ChEBI" id="CHEBI:30616"/>
        <label>2</label>
    </ligand>
</feature>
<feature type="binding site" evidence="1">
    <location>
        <position position="855"/>
    </location>
    <ligand>
        <name>Mg(2+)</name>
        <dbReference type="ChEBI" id="CHEBI:18420"/>
        <label>3</label>
    </ligand>
</feature>
<feature type="binding site" evidence="1">
    <location>
        <position position="855"/>
    </location>
    <ligand>
        <name>Mg(2+)</name>
        <dbReference type="ChEBI" id="CHEBI:18420"/>
        <label>4</label>
    </ligand>
</feature>
<feature type="binding site" evidence="1">
    <location>
        <position position="855"/>
    </location>
    <ligand>
        <name>Mn(2+)</name>
        <dbReference type="ChEBI" id="CHEBI:29035"/>
        <label>3</label>
    </ligand>
</feature>
<feature type="binding site" evidence="1">
    <location>
        <position position="855"/>
    </location>
    <ligand>
        <name>Mn(2+)</name>
        <dbReference type="ChEBI" id="CHEBI:29035"/>
        <label>4</label>
    </ligand>
</feature>
<feature type="binding site" evidence="1">
    <location>
        <position position="857"/>
    </location>
    <ligand>
        <name>Mg(2+)</name>
        <dbReference type="ChEBI" id="CHEBI:18420"/>
        <label>4</label>
    </ligand>
</feature>
<feature type="binding site" evidence="1">
    <location>
        <position position="857"/>
    </location>
    <ligand>
        <name>Mn(2+)</name>
        <dbReference type="ChEBI" id="CHEBI:29035"/>
        <label>4</label>
    </ligand>
</feature>
<comment type="function">
    <text evidence="1">Large subunit of the glutamine-dependent carbamoyl phosphate synthetase (CPSase). CPSase catalyzes the formation of carbamoyl phosphate from the ammonia moiety of glutamine, carbonate, and phosphate donated by ATP, constituting the first step of 2 biosynthetic pathways, one leading to arginine and/or urea and the other to pyrimidine nucleotides. The large subunit (synthetase) binds the substrates ammonia (free or transferred from glutamine from the small subunit), hydrogencarbonate and ATP and carries out an ATP-coupled ligase reaction, activating hydrogencarbonate by forming carboxy phosphate which reacts with ammonia to form carbamoyl phosphate.</text>
</comment>
<comment type="catalytic activity">
    <reaction evidence="1">
        <text>hydrogencarbonate + L-glutamine + 2 ATP + H2O = carbamoyl phosphate + L-glutamate + 2 ADP + phosphate + 2 H(+)</text>
        <dbReference type="Rhea" id="RHEA:18633"/>
        <dbReference type="ChEBI" id="CHEBI:15377"/>
        <dbReference type="ChEBI" id="CHEBI:15378"/>
        <dbReference type="ChEBI" id="CHEBI:17544"/>
        <dbReference type="ChEBI" id="CHEBI:29985"/>
        <dbReference type="ChEBI" id="CHEBI:30616"/>
        <dbReference type="ChEBI" id="CHEBI:43474"/>
        <dbReference type="ChEBI" id="CHEBI:58228"/>
        <dbReference type="ChEBI" id="CHEBI:58359"/>
        <dbReference type="ChEBI" id="CHEBI:456216"/>
        <dbReference type="EC" id="6.3.5.5"/>
    </reaction>
</comment>
<comment type="catalytic activity">
    <molecule>Carbamoyl phosphate synthase large chain</molecule>
    <reaction evidence="1">
        <text>hydrogencarbonate + NH4(+) + 2 ATP = carbamoyl phosphate + 2 ADP + phosphate + 2 H(+)</text>
        <dbReference type="Rhea" id="RHEA:18029"/>
        <dbReference type="ChEBI" id="CHEBI:15378"/>
        <dbReference type="ChEBI" id="CHEBI:17544"/>
        <dbReference type="ChEBI" id="CHEBI:28938"/>
        <dbReference type="ChEBI" id="CHEBI:30616"/>
        <dbReference type="ChEBI" id="CHEBI:43474"/>
        <dbReference type="ChEBI" id="CHEBI:58228"/>
        <dbReference type="ChEBI" id="CHEBI:456216"/>
        <dbReference type="EC" id="6.3.4.16"/>
    </reaction>
</comment>
<comment type="cofactor">
    <cofactor evidence="1">
        <name>Mg(2+)</name>
        <dbReference type="ChEBI" id="CHEBI:18420"/>
    </cofactor>
    <cofactor evidence="1">
        <name>Mn(2+)</name>
        <dbReference type="ChEBI" id="CHEBI:29035"/>
    </cofactor>
    <text evidence="1">Binds 4 Mg(2+) or Mn(2+) ions per subunit.</text>
</comment>
<comment type="pathway">
    <text evidence="1">Amino-acid biosynthesis; L-arginine biosynthesis; carbamoyl phosphate from bicarbonate: step 1/1.</text>
</comment>
<comment type="pathway">
    <text evidence="1">Pyrimidine metabolism; UMP biosynthesis via de novo pathway; (S)-dihydroorotate from bicarbonate: step 1/3.</text>
</comment>
<comment type="subunit">
    <text evidence="1">Composed of two chains; the small (or glutamine) chain promotes the hydrolysis of glutamine to ammonia, which is used by the large (or ammonia) chain to synthesize carbamoyl phosphate. Tetramer of heterodimers (alpha,beta)4.</text>
</comment>
<comment type="domain">
    <text evidence="1">The large subunit is composed of 2 ATP-grasp domains that are involved in binding the 2 ATP molecules needed for carbamoyl phosphate synthesis. The N-terminal ATP-grasp domain (referred to as the carboxyphosphate synthetic component) catalyzes the ATP-dependent phosphorylation of hydrogencarbonate to carboxyphosphate and the subsequent nucleophilic attack by ammonia to form a carbamate intermediate. The C-terminal ATP-grasp domain (referred to as the carbamoyl phosphate synthetic component) then catalyzes the phosphorylation of carbamate with the second ATP to form the end product carbamoyl phosphate. The reactive and unstable enzyme intermediates are sequentially channeled from one active site to the next through the interior of the protein over a distance of at least 96 A.</text>
</comment>
<comment type="similarity">
    <text evidence="1">Belongs to the CarB family.</text>
</comment>
<protein>
    <recommendedName>
        <fullName evidence="1">Carbamoyl phosphate synthase large chain</fullName>
        <ecNumber evidence="1">6.3.4.16</ecNumber>
        <ecNumber evidence="1">6.3.5.5</ecNumber>
    </recommendedName>
    <alternativeName>
        <fullName evidence="1">Carbamoyl phosphate synthetase ammonia chain</fullName>
    </alternativeName>
</protein>
<gene>
    <name evidence="1" type="primary">carB</name>
    <name type="ordered locus">BQ2027_MB1419</name>
</gene>